<gene>
    <name type="ordered locus">YLR361C-A</name>
</gene>
<accession>Q3E795</accession>
<accession>D6VYZ9</accession>
<organism>
    <name type="scientific">Saccharomyces cerevisiae (strain ATCC 204508 / S288c)</name>
    <name type="common">Baker's yeast</name>
    <dbReference type="NCBI Taxonomy" id="559292"/>
    <lineage>
        <taxon>Eukaryota</taxon>
        <taxon>Fungi</taxon>
        <taxon>Dikarya</taxon>
        <taxon>Ascomycota</taxon>
        <taxon>Saccharomycotina</taxon>
        <taxon>Saccharomycetes</taxon>
        <taxon>Saccharomycetales</taxon>
        <taxon>Saccharomycetaceae</taxon>
        <taxon>Saccharomyces</taxon>
    </lineage>
</organism>
<keyword id="KW-1185">Reference proteome</keyword>
<reference key="1">
    <citation type="journal article" date="1997" name="Nature">
        <title>The nucleotide sequence of Saccharomyces cerevisiae chromosome XII.</title>
        <authorList>
            <person name="Johnston M."/>
            <person name="Hillier L.W."/>
            <person name="Riles L."/>
            <person name="Albermann K."/>
            <person name="Andre B."/>
            <person name="Ansorge W."/>
            <person name="Benes V."/>
            <person name="Brueckner M."/>
            <person name="Delius H."/>
            <person name="Dubois E."/>
            <person name="Duesterhoeft A."/>
            <person name="Entian K.-D."/>
            <person name="Floeth M."/>
            <person name="Goffeau A."/>
            <person name="Hebling U."/>
            <person name="Heumann K."/>
            <person name="Heuss-Neitzel D."/>
            <person name="Hilbert H."/>
            <person name="Hilger F."/>
            <person name="Kleine K."/>
            <person name="Koetter P."/>
            <person name="Louis E.J."/>
            <person name="Messenguy F."/>
            <person name="Mewes H.-W."/>
            <person name="Miosga T."/>
            <person name="Moestl D."/>
            <person name="Mueller-Auer S."/>
            <person name="Nentwich U."/>
            <person name="Obermaier B."/>
            <person name="Piravandi E."/>
            <person name="Pohl T.M."/>
            <person name="Portetelle D."/>
            <person name="Purnelle B."/>
            <person name="Rechmann S."/>
            <person name="Rieger M."/>
            <person name="Rinke M."/>
            <person name="Rose M."/>
            <person name="Scharfe M."/>
            <person name="Scherens B."/>
            <person name="Scholler P."/>
            <person name="Schwager C."/>
            <person name="Schwarz S."/>
            <person name="Underwood A.P."/>
            <person name="Urrestarazu L.A."/>
            <person name="Vandenbol M."/>
            <person name="Verhasselt P."/>
            <person name="Vierendeels F."/>
            <person name="Voet M."/>
            <person name="Volckaert G."/>
            <person name="Voss H."/>
            <person name="Wambutt R."/>
            <person name="Wedler E."/>
            <person name="Wedler H."/>
            <person name="Zimmermann F.K."/>
            <person name="Zollner A."/>
            <person name="Hani J."/>
            <person name="Hoheisel J.D."/>
        </authorList>
    </citation>
    <scope>NUCLEOTIDE SEQUENCE [LARGE SCALE GENOMIC DNA]</scope>
    <source>
        <strain>ATCC 204508 / S288c</strain>
    </source>
</reference>
<reference key="2">
    <citation type="journal article" date="2014" name="G3 (Bethesda)">
        <title>The reference genome sequence of Saccharomyces cerevisiae: Then and now.</title>
        <authorList>
            <person name="Engel S.R."/>
            <person name="Dietrich F.S."/>
            <person name="Fisk D.G."/>
            <person name="Binkley G."/>
            <person name="Balakrishnan R."/>
            <person name="Costanzo M.C."/>
            <person name="Dwight S.S."/>
            <person name="Hitz B.C."/>
            <person name="Karra K."/>
            <person name="Nash R.S."/>
            <person name="Weng S."/>
            <person name="Wong E.D."/>
            <person name="Lloyd P."/>
            <person name="Skrzypek M.S."/>
            <person name="Miyasato S.R."/>
            <person name="Simison M."/>
            <person name="Cherry J.M."/>
        </authorList>
    </citation>
    <scope>GENOME REANNOTATION</scope>
    <source>
        <strain>ATCC 204508 / S288c</strain>
    </source>
</reference>
<reference key="3">
    <citation type="journal article" date="2002" name="Genome Res.">
        <title>Parallel identification of new genes in Saccharomyces cerevisiae.</title>
        <authorList>
            <person name="Oshiro G."/>
            <person name="Wodicka L.M."/>
            <person name="Washburn M.P."/>
            <person name="Yates J.R. III"/>
            <person name="Lockhart D.J."/>
            <person name="Winzeler E.A."/>
        </authorList>
    </citation>
    <scope>IDENTIFICATION BY MASS SPECTROMETRY</scope>
</reference>
<reference key="4">
    <citation type="journal article" date="2012" name="Proc. Natl. Acad. Sci. U.S.A.">
        <title>N-terminal acetylome analyses and functional insights of the N-terminal acetyltransferase NatB.</title>
        <authorList>
            <person name="Van Damme P."/>
            <person name="Lasa M."/>
            <person name="Polevoda B."/>
            <person name="Gazquez C."/>
            <person name="Elosegui-Artola A."/>
            <person name="Kim D.S."/>
            <person name="De Juan-Pardo E."/>
            <person name="Demeyer K."/>
            <person name="Hole K."/>
            <person name="Larrea E."/>
            <person name="Timmerman E."/>
            <person name="Prieto J."/>
            <person name="Arnesen T."/>
            <person name="Sherman F."/>
            <person name="Gevaert K."/>
            <person name="Aldabe R."/>
        </authorList>
    </citation>
    <scope>IDENTIFICATION BY MASS SPECTROMETRY [LARGE SCALE ANALYSIS]</scope>
</reference>
<protein>
    <recommendedName>
        <fullName>Uncharacterized protein YLR361C-A</fullName>
    </recommendedName>
</protein>
<evidence type="ECO:0000256" key="1">
    <source>
        <dbReference type="SAM" id="MobiDB-lite"/>
    </source>
</evidence>
<dbReference type="EMBL" id="U19103">
    <property type="status" value="NOT_ANNOTATED_CDS"/>
    <property type="molecule type" value="Genomic_DNA"/>
</dbReference>
<dbReference type="EMBL" id="BK006945">
    <property type="protein sequence ID" value="DAA09665.1"/>
    <property type="molecule type" value="Genomic_DNA"/>
</dbReference>
<dbReference type="RefSeq" id="NP_878134.3">
    <property type="nucleotide sequence ID" value="NM_001184659.3"/>
</dbReference>
<dbReference type="BioGRID" id="36964">
    <property type="interactions" value="27"/>
</dbReference>
<dbReference type="FunCoup" id="Q3E795">
    <property type="interactions" value="6"/>
</dbReference>
<dbReference type="IntAct" id="Q3E795">
    <property type="interactions" value="1"/>
</dbReference>
<dbReference type="MINT" id="Q3E795"/>
<dbReference type="iPTMnet" id="Q3E795"/>
<dbReference type="PaxDb" id="4932-YLR361C-A"/>
<dbReference type="PeptideAtlas" id="Q3E795"/>
<dbReference type="EnsemblFungi" id="YLR361C-A_mRNA">
    <property type="protein sequence ID" value="YLR361C-A"/>
    <property type="gene ID" value="YLR361C-A"/>
</dbReference>
<dbReference type="GeneID" id="1466422"/>
<dbReference type="KEGG" id="sce:YLR361C-A"/>
<dbReference type="AGR" id="SGD:S000028845"/>
<dbReference type="SGD" id="S000028845">
    <property type="gene designation" value="YLR361C-A"/>
</dbReference>
<dbReference type="VEuPathDB" id="FungiDB:YLR361C-A"/>
<dbReference type="eggNOG" id="ENOG502T2KU">
    <property type="taxonomic scope" value="Eukaryota"/>
</dbReference>
<dbReference type="HOGENOM" id="CLU_182460_0_0_1"/>
<dbReference type="InParanoid" id="Q3E795"/>
<dbReference type="OMA" id="HDNTEVY"/>
<dbReference type="OrthoDB" id="4055815at2759"/>
<dbReference type="BioCyc" id="YEAST:G3O-32590-MONOMER"/>
<dbReference type="PRO" id="PR:Q3E795"/>
<dbReference type="Proteomes" id="UP000002311">
    <property type="component" value="Chromosome XII"/>
</dbReference>
<dbReference type="RNAct" id="Q3E795">
    <property type="molecule type" value="protein"/>
</dbReference>
<sequence length="98" mass="11050">MAVSNNNNNNNSKERTQNIKEVEEKLGENPKITLKGGGKTKIMDFEQLRKPHCVRPSARFPVEDTAGGLLRTGGHRPQISDEEVSKRHHEQSHGQEDH</sequence>
<proteinExistence type="evidence at protein level"/>
<feature type="chain" id="PRO_0000247214" description="Uncharacterized protein YLR361C-A">
    <location>
        <begin position="1"/>
        <end position="98"/>
    </location>
</feature>
<feature type="region of interest" description="Disordered" evidence="1">
    <location>
        <begin position="58"/>
        <end position="98"/>
    </location>
</feature>
<name>YL361_YEAST</name>